<feature type="chain" id="PRO_0000058746" description="Indian hedgehog protein">
    <location>
        <begin position="1" status="less than"/>
        <end position="58" status="greater than"/>
    </location>
</feature>
<feature type="binding site" evidence="2">
    <location>
        <position position="13"/>
    </location>
    <ligand>
        <name>Ca(2+)</name>
        <dbReference type="ChEBI" id="CHEBI:29108"/>
        <label>1</label>
    </ligand>
</feature>
<feature type="binding site" evidence="2">
    <location>
        <position position="14"/>
    </location>
    <ligand>
        <name>Ca(2+)</name>
        <dbReference type="ChEBI" id="CHEBI:29108"/>
        <label>1</label>
    </ligand>
</feature>
<feature type="binding site" evidence="2">
    <location>
        <position position="14"/>
    </location>
    <ligand>
        <name>Ca(2+)</name>
        <dbReference type="ChEBI" id="CHEBI:29108"/>
        <label>2</label>
    </ligand>
</feature>
<feature type="binding site" evidence="2">
    <location>
        <position position="17"/>
    </location>
    <ligand>
        <name>Ca(2+)</name>
        <dbReference type="ChEBI" id="CHEBI:29108"/>
        <label>2</label>
    </ligand>
</feature>
<feature type="binding site" evidence="2">
    <location>
        <position position="19"/>
    </location>
    <ligand>
        <name>Ca(2+)</name>
        <dbReference type="ChEBI" id="CHEBI:29108"/>
        <label>2</label>
    </ligand>
</feature>
<feature type="binding site" evidence="2">
    <location>
        <position position="28"/>
    </location>
    <ligand>
        <name>Zn(2+)</name>
        <dbReference type="ChEBI" id="CHEBI:29105"/>
    </ligand>
</feature>
<feature type="binding site" evidence="2">
    <location>
        <position position="35"/>
    </location>
    <ligand>
        <name>Zn(2+)</name>
        <dbReference type="ChEBI" id="CHEBI:29105"/>
    </ligand>
</feature>
<feature type="non-terminal residue">
    <location>
        <position position="1"/>
    </location>
</feature>
<feature type="non-terminal residue">
    <location>
        <position position="58"/>
    </location>
</feature>
<gene>
    <name type="primary">ihh</name>
</gene>
<dbReference type="EMBL" id="U51384">
    <property type="protein sequence ID" value="AAB38608.1"/>
    <property type="molecule type" value="Genomic_DNA"/>
</dbReference>
<dbReference type="SMR" id="P79852"/>
<dbReference type="GO" id="GO:0005615">
    <property type="term" value="C:extracellular space"/>
    <property type="evidence" value="ECO:0007669"/>
    <property type="project" value="TreeGrafter"/>
</dbReference>
<dbReference type="GO" id="GO:0005886">
    <property type="term" value="C:plasma membrane"/>
    <property type="evidence" value="ECO:0007669"/>
    <property type="project" value="UniProtKB-SubCell"/>
</dbReference>
<dbReference type="GO" id="GO:0005509">
    <property type="term" value="F:calcium ion binding"/>
    <property type="evidence" value="ECO:0007669"/>
    <property type="project" value="TreeGrafter"/>
</dbReference>
<dbReference type="GO" id="GO:0005113">
    <property type="term" value="F:patched binding"/>
    <property type="evidence" value="ECO:0007669"/>
    <property type="project" value="TreeGrafter"/>
</dbReference>
<dbReference type="GO" id="GO:0008233">
    <property type="term" value="F:peptidase activity"/>
    <property type="evidence" value="ECO:0007669"/>
    <property type="project" value="UniProtKB-KW"/>
</dbReference>
<dbReference type="GO" id="GO:0001708">
    <property type="term" value="P:cell fate specification"/>
    <property type="evidence" value="ECO:0007669"/>
    <property type="project" value="TreeGrafter"/>
</dbReference>
<dbReference type="GO" id="GO:0007267">
    <property type="term" value="P:cell-cell signaling"/>
    <property type="evidence" value="ECO:0007669"/>
    <property type="project" value="InterPro"/>
</dbReference>
<dbReference type="GO" id="GO:0006508">
    <property type="term" value="P:proteolysis"/>
    <property type="evidence" value="ECO:0007669"/>
    <property type="project" value="UniProtKB-KW"/>
</dbReference>
<dbReference type="GO" id="GO:0010468">
    <property type="term" value="P:regulation of gene expression"/>
    <property type="evidence" value="ECO:0007669"/>
    <property type="project" value="TreeGrafter"/>
</dbReference>
<dbReference type="GO" id="GO:0007224">
    <property type="term" value="P:smoothened signaling pathway"/>
    <property type="evidence" value="ECO:0007669"/>
    <property type="project" value="TreeGrafter"/>
</dbReference>
<dbReference type="Gene3D" id="3.30.1380.10">
    <property type="match status" value="1"/>
</dbReference>
<dbReference type="InterPro" id="IPR001657">
    <property type="entry name" value="Hedgehog"/>
</dbReference>
<dbReference type="InterPro" id="IPR009045">
    <property type="entry name" value="Hedgehog_sig/DD-Pept_Zn-bd_sf"/>
</dbReference>
<dbReference type="InterPro" id="IPR050387">
    <property type="entry name" value="Hedgehog_Signaling"/>
</dbReference>
<dbReference type="InterPro" id="IPR000320">
    <property type="entry name" value="Hedgehog_signalling_dom"/>
</dbReference>
<dbReference type="PANTHER" id="PTHR11889">
    <property type="entry name" value="HEDGEHOG"/>
    <property type="match status" value="1"/>
</dbReference>
<dbReference type="PANTHER" id="PTHR11889:SF39">
    <property type="entry name" value="INDIAN HEDGEHOG PROTEIN"/>
    <property type="match status" value="1"/>
</dbReference>
<dbReference type="Pfam" id="PF01085">
    <property type="entry name" value="HH_signal"/>
    <property type="match status" value="1"/>
</dbReference>
<dbReference type="PRINTS" id="PR00632">
    <property type="entry name" value="SONICHHOG"/>
</dbReference>
<dbReference type="SUPFAM" id="SSF55166">
    <property type="entry name" value="Hedgehog/DD-peptidase"/>
    <property type="match status" value="1"/>
</dbReference>
<organism>
    <name type="scientific">Puntigrus tetrazona</name>
    <name type="common">Sumatra barb</name>
    <name type="synonym">Puntius tetrazona</name>
    <dbReference type="NCBI Taxonomy" id="1606681"/>
    <lineage>
        <taxon>Eukaryota</taxon>
        <taxon>Metazoa</taxon>
        <taxon>Chordata</taxon>
        <taxon>Craniata</taxon>
        <taxon>Vertebrata</taxon>
        <taxon>Euteleostomi</taxon>
        <taxon>Actinopterygii</taxon>
        <taxon>Neopterygii</taxon>
        <taxon>Teleostei</taxon>
        <taxon>Ostariophysi</taxon>
        <taxon>Cypriniformes</taxon>
        <taxon>Cyprinidae</taxon>
        <taxon>Smiliogastrinae</taxon>
        <taxon>Puntigrus</taxon>
    </lineage>
</organism>
<proteinExistence type="inferred from homology"/>
<evidence type="ECO:0000250" key="1"/>
<evidence type="ECO:0000250" key="2">
    <source>
        <dbReference type="UniProtKB" id="Q14623"/>
    </source>
</evidence>
<evidence type="ECO:0000305" key="3"/>
<comment type="function">
    <text evidence="1">Intercellular signal essential for a variety of patterning events during development.</text>
</comment>
<comment type="subcellular location">
    <subcellularLocation>
        <location evidence="1">Cell membrane</location>
    </subcellularLocation>
    <subcellularLocation>
        <location evidence="1">Secreted</location>
        <location evidence="1">Extracellular space</location>
    </subcellularLocation>
    <text evidence="1">Indian hedgehog protein N-product: Cell membrane; Lipid-anchor; Extracellular side. The N-terminal peptide remains associated with the cell surface. Indian hedgehog protein C-product: Secreted, extracellular space. The C-terminal peptide diffuses from the cell.</text>
</comment>
<comment type="domain">
    <text evidence="1">The indian hedgehog protein N-product binds calcium and zinc ions; this stabilizes the protein fold and is essential for protein-protein interactions mediated by this domain.</text>
</comment>
<comment type="PTM">
    <text evidence="1">The C-terminal domain displays an autoproteolysis activity and a cholesterol transferase activity. Both activities result in the cleavage of the full-length protein and covalent attachment of a cholesterol moiety to the C-terminal of the newly generated N-terminal fragment (N-product). The N-product is the active species in both local and long-range signaling, whereas the C-product has no signaling activity (By similarity).</text>
</comment>
<comment type="PTM">
    <text evidence="1">Cholesterylation is required for N-product targeting to lipid rafts and multimerization.</text>
</comment>
<comment type="PTM">
    <text evidence="1">N-palmitoylation is required for N-product multimerization and full activity.</text>
</comment>
<comment type="similarity">
    <text evidence="3">Belongs to the hedgehog family.</text>
</comment>
<name>IHH_PUNTE</name>
<protein>
    <recommendedName>
        <fullName>Indian hedgehog protein</fullName>
        <shortName>IHH</shortName>
    </recommendedName>
</protein>
<reference key="1">
    <citation type="journal article" date="1996" name="Proc. Natl. Acad. Sci. U.S.A.">
        <title>Evolutionary analyses of hedgehog and Hoxd-10 genes in fish species closely related to the zebrafish.</title>
        <authorList>
            <person name="Zardoya R."/>
            <person name="Abouheif E."/>
            <person name="Meyer A."/>
        </authorList>
    </citation>
    <scope>NUCLEOTIDE SEQUENCE [GENOMIC DNA]</scope>
    <source>
        <tissue>Muscle</tissue>
    </source>
</reference>
<sequence>VMNLWPGVRLRVTEGWDEDGHHSEESLHYEGRAVDITTSDRDRNKYAMLARLAVEAGF</sequence>
<accession>P79852</accession>
<keyword id="KW-0068">Autocatalytic cleavage</keyword>
<keyword id="KW-0106">Calcium</keyword>
<keyword id="KW-1003">Cell membrane</keyword>
<keyword id="KW-0217">Developmental protein</keyword>
<keyword id="KW-0378">Hydrolase</keyword>
<keyword id="KW-0449">Lipoprotein</keyword>
<keyword id="KW-0472">Membrane</keyword>
<keyword id="KW-0479">Metal-binding</keyword>
<keyword id="KW-0564">Palmitate</keyword>
<keyword id="KW-0645">Protease</keyword>
<keyword id="KW-0964">Secreted</keyword>
<keyword id="KW-0862">Zinc</keyword>